<feature type="chain" id="PRO_1000074931" description="Ribonuclease HII">
    <location>
        <begin position="1"/>
        <end position="198"/>
    </location>
</feature>
<feature type="domain" description="RNase H type-2" evidence="2">
    <location>
        <begin position="10"/>
        <end position="198"/>
    </location>
</feature>
<feature type="binding site" evidence="1">
    <location>
        <position position="16"/>
    </location>
    <ligand>
        <name>a divalent metal cation</name>
        <dbReference type="ChEBI" id="CHEBI:60240"/>
    </ligand>
</feature>
<feature type="binding site" evidence="1">
    <location>
        <position position="17"/>
    </location>
    <ligand>
        <name>a divalent metal cation</name>
        <dbReference type="ChEBI" id="CHEBI:60240"/>
    </ligand>
</feature>
<feature type="binding site" evidence="1">
    <location>
        <position position="108"/>
    </location>
    <ligand>
        <name>a divalent metal cation</name>
        <dbReference type="ChEBI" id="CHEBI:60240"/>
    </ligand>
</feature>
<protein>
    <recommendedName>
        <fullName evidence="1">Ribonuclease HII</fullName>
        <shortName evidence="1">RNase HII</shortName>
        <ecNumber evidence="1">3.1.26.4</ecNumber>
    </recommendedName>
</protein>
<reference key="1">
    <citation type="submission" date="2007-11" db="EMBL/GenBank/DDBJ databases">
        <authorList>
            <consortium name="The Salmonella enterica serovar Arizonae Genome Sequencing Project"/>
            <person name="McClelland M."/>
            <person name="Sanderson E.K."/>
            <person name="Porwollik S."/>
            <person name="Spieth J."/>
            <person name="Clifton W.S."/>
            <person name="Fulton R."/>
            <person name="Chunyan W."/>
            <person name="Wollam A."/>
            <person name="Shah N."/>
            <person name="Pepin K."/>
            <person name="Bhonagiri V."/>
            <person name="Nash W."/>
            <person name="Johnson M."/>
            <person name="Thiruvilangam P."/>
            <person name="Wilson R."/>
        </authorList>
    </citation>
    <scope>NUCLEOTIDE SEQUENCE [LARGE SCALE GENOMIC DNA]</scope>
    <source>
        <strain>ATCC BAA-731 / CDC346-86 / RSK2980</strain>
    </source>
</reference>
<name>RNH2_SALAR</name>
<comment type="function">
    <text evidence="1">Endonuclease that specifically degrades the RNA of RNA-DNA hybrids.</text>
</comment>
<comment type="catalytic activity">
    <reaction evidence="1">
        <text>Endonucleolytic cleavage to 5'-phosphomonoester.</text>
        <dbReference type="EC" id="3.1.26.4"/>
    </reaction>
</comment>
<comment type="cofactor">
    <cofactor evidence="1">
        <name>Mn(2+)</name>
        <dbReference type="ChEBI" id="CHEBI:29035"/>
    </cofactor>
    <cofactor evidence="1">
        <name>Mg(2+)</name>
        <dbReference type="ChEBI" id="CHEBI:18420"/>
    </cofactor>
    <text evidence="1">Manganese or magnesium. Binds 1 divalent metal ion per monomer in the absence of substrate. May bind a second metal ion after substrate binding.</text>
</comment>
<comment type="subcellular location">
    <subcellularLocation>
        <location evidence="1">Cytoplasm</location>
    </subcellularLocation>
</comment>
<comment type="similarity">
    <text evidence="1">Belongs to the RNase HII family.</text>
</comment>
<organism>
    <name type="scientific">Salmonella arizonae (strain ATCC BAA-731 / CDC346-86 / RSK2980)</name>
    <dbReference type="NCBI Taxonomy" id="41514"/>
    <lineage>
        <taxon>Bacteria</taxon>
        <taxon>Pseudomonadati</taxon>
        <taxon>Pseudomonadota</taxon>
        <taxon>Gammaproteobacteria</taxon>
        <taxon>Enterobacterales</taxon>
        <taxon>Enterobacteriaceae</taxon>
        <taxon>Salmonella</taxon>
    </lineage>
</organism>
<keyword id="KW-0963">Cytoplasm</keyword>
<keyword id="KW-0255">Endonuclease</keyword>
<keyword id="KW-0378">Hydrolase</keyword>
<keyword id="KW-0464">Manganese</keyword>
<keyword id="KW-0479">Metal-binding</keyword>
<keyword id="KW-0540">Nuclease</keyword>
<keyword id="KW-1185">Reference proteome</keyword>
<evidence type="ECO:0000255" key="1">
    <source>
        <dbReference type="HAMAP-Rule" id="MF_00052"/>
    </source>
</evidence>
<evidence type="ECO:0000255" key="2">
    <source>
        <dbReference type="PROSITE-ProRule" id="PRU01319"/>
    </source>
</evidence>
<dbReference type="EC" id="3.1.26.4" evidence="1"/>
<dbReference type="EMBL" id="CP000880">
    <property type="protein sequence ID" value="ABX22621.1"/>
    <property type="molecule type" value="Genomic_DNA"/>
</dbReference>
<dbReference type="SMR" id="A9MPH8"/>
<dbReference type="STRING" id="41514.SARI_02772"/>
<dbReference type="KEGG" id="ses:SARI_02772"/>
<dbReference type="HOGENOM" id="CLU_036532_3_2_6"/>
<dbReference type="Proteomes" id="UP000002084">
    <property type="component" value="Chromosome"/>
</dbReference>
<dbReference type="GO" id="GO:0005737">
    <property type="term" value="C:cytoplasm"/>
    <property type="evidence" value="ECO:0007669"/>
    <property type="project" value="UniProtKB-SubCell"/>
</dbReference>
<dbReference type="GO" id="GO:0032299">
    <property type="term" value="C:ribonuclease H2 complex"/>
    <property type="evidence" value="ECO:0007669"/>
    <property type="project" value="TreeGrafter"/>
</dbReference>
<dbReference type="GO" id="GO:0030145">
    <property type="term" value="F:manganese ion binding"/>
    <property type="evidence" value="ECO:0007669"/>
    <property type="project" value="UniProtKB-UniRule"/>
</dbReference>
<dbReference type="GO" id="GO:0003723">
    <property type="term" value="F:RNA binding"/>
    <property type="evidence" value="ECO:0007669"/>
    <property type="project" value="InterPro"/>
</dbReference>
<dbReference type="GO" id="GO:0004523">
    <property type="term" value="F:RNA-DNA hybrid ribonuclease activity"/>
    <property type="evidence" value="ECO:0007669"/>
    <property type="project" value="UniProtKB-UniRule"/>
</dbReference>
<dbReference type="GO" id="GO:0043137">
    <property type="term" value="P:DNA replication, removal of RNA primer"/>
    <property type="evidence" value="ECO:0007669"/>
    <property type="project" value="TreeGrafter"/>
</dbReference>
<dbReference type="GO" id="GO:0006298">
    <property type="term" value="P:mismatch repair"/>
    <property type="evidence" value="ECO:0007669"/>
    <property type="project" value="TreeGrafter"/>
</dbReference>
<dbReference type="CDD" id="cd07182">
    <property type="entry name" value="RNase_HII_bacteria_HII_like"/>
    <property type="match status" value="1"/>
</dbReference>
<dbReference type="FunFam" id="3.30.420.10:FF:000006">
    <property type="entry name" value="Ribonuclease HII"/>
    <property type="match status" value="1"/>
</dbReference>
<dbReference type="Gene3D" id="3.30.420.10">
    <property type="entry name" value="Ribonuclease H-like superfamily/Ribonuclease H"/>
    <property type="match status" value="1"/>
</dbReference>
<dbReference type="HAMAP" id="MF_00052_B">
    <property type="entry name" value="RNase_HII_B"/>
    <property type="match status" value="1"/>
</dbReference>
<dbReference type="InterPro" id="IPR022898">
    <property type="entry name" value="RNase_HII"/>
</dbReference>
<dbReference type="InterPro" id="IPR001352">
    <property type="entry name" value="RNase_HII/HIII"/>
</dbReference>
<dbReference type="InterPro" id="IPR024567">
    <property type="entry name" value="RNase_HII/HIII_dom"/>
</dbReference>
<dbReference type="InterPro" id="IPR012337">
    <property type="entry name" value="RNaseH-like_sf"/>
</dbReference>
<dbReference type="InterPro" id="IPR036397">
    <property type="entry name" value="RNaseH_sf"/>
</dbReference>
<dbReference type="NCBIfam" id="NF000594">
    <property type="entry name" value="PRK00015.1-1"/>
    <property type="match status" value="1"/>
</dbReference>
<dbReference type="NCBIfam" id="NF000595">
    <property type="entry name" value="PRK00015.1-3"/>
    <property type="match status" value="1"/>
</dbReference>
<dbReference type="NCBIfam" id="NF000596">
    <property type="entry name" value="PRK00015.1-4"/>
    <property type="match status" value="1"/>
</dbReference>
<dbReference type="PANTHER" id="PTHR10954">
    <property type="entry name" value="RIBONUCLEASE H2 SUBUNIT A"/>
    <property type="match status" value="1"/>
</dbReference>
<dbReference type="PANTHER" id="PTHR10954:SF18">
    <property type="entry name" value="RIBONUCLEASE HII"/>
    <property type="match status" value="1"/>
</dbReference>
<dbReference type="Pfam" id="PF01351">
    <property type="entry name" value="RNase_HII"/>
    <property type="match status" value="1"/>
</dbReference>
<dbReference type="SUPFAM" id="SSF53098">
    <property type="entry name" value="Ribonuclease H-like"/>
    <property type="match status" value="1"/>
</dbReference>
<dbReference type="PROSITE" id="PS51975">
    <property type="entry name" value="RNASE_H_2"/>
    <property type="match status" value="1"/>
</dbReference>
<proteinExistence type="inferred from homology"/>
<sequence length="198" mass="21517">MIEFVYPHTHLVAGVDEVGRGPLVGAVVTAAVILDPARPIVGLNDSKKLSEKRRLALYDEIKEKALSWSLGRAEPHEIDELNILHATMLAMQRAVAGLHIAPEYVLIDGNRCPALPVPSMAVVKGDSRVAEISAASILAKVTRDAEMAALDIIFPQYGFAQHKGYPTAFHLEKLAQYGATAHHRRSFAPVKRALELAS</sequence>
<gene>
    <name evidence="1" type="primary">rnhB</name>
    <name type="ordered locus">SARI_02772</name>
</gene>
<accession>A9MPH8</accession>